<name>PAND_NEIG2</name>
<evidence type="ECO:0000255" key="1">
    <source>
        <dbReference type="HAMAP-Rule" id="MF_00446"/>
    </source>
</evidence>
<proteinExistence type="inferred from homology"/>
<reference key="1">
    <citation type="journal article" date="2008" name="J. Bacteriol.">
        <title>Complete genome sequence of Neisseria gonorrhoeae NCCP11945.</title>
        <authorList>
            <person name="Chung G.T."/>
            <person name="Yoo J.S."/>
            <person name="Oh H.B."/>
            <person name="Lee Y.S."/>
            <person name="Cha S.H."/>
            <person name="Kim S.J."/>
            <person name="Yoo C.K."/>
        </authorList>
    </citation>
    <scope>NUCLEOTIDE SEQUENCE [LARGE SCALE GENOMIC DNA]</scope>
    <source>
        <strain>NCCP11945</strain>
    </source>
</reference>
<accession>B4RMD5</accession>
<gene>
    <name evidence="1" type="primary">panD</name>
    <name type="ordered locus">NGK_1295</name>
</gene>
<protein>
    <recommendedName>
        <fullName evidence="1">Aspartate 1-decarboxylase</fullName>
        <ecNumber evidence="1">4.1.1.11</ecNumber>
    </recommendedName>
    <alternativeName>
        <fullName evidence="1">Aspartate alpha-decarboxylase</fullName>
    </alternativeName>
    <component>
        <recommendedName>
            <fullName evidence="1">Aspartate 1-decarboxylase beta chain</fullName>
        </recommendedName>
    </component>
    <component>
        <recommendedName>
            <fullName evidence="1">Aspartate 1-decarboxylase alpha chain</fullName>
        </recommendedName>
    </component>
</protein>
<organism>
    <name type="scientific">Neisseria gonorrhoeae (strain NCCP11945)</name>
    <dbReference type="NCBI Taxonomy" id="521006"/>
    <lineage>
        <taxon>Bacteria</taxon>
        <taxon>Pseudomonadati</taxon>
        <taxon>Pseudomonadota</taxon>
        <taxon>Betaproteobacteria</taxon>
        <taxon>Neisseriales</taxon>
        <taxon>Neisseriaceae</taxon>
        <taxon>Neisseria</taxon>
    </lineage>
</organism>
<feature type="chain" id="PRO_1000124845" description="Aspartate 1-decarboxylase beta chain" evidence="1">
    <location>
        <begin position="1"/>
        <end position="24"/>
    </location>
</feature>
<feature type="chain" id="PRO_1000124846" description="Aspartate 1-decarboxylase alpha chain" evidence="1">
    <location>
        <begin position="25"/>
        <end position="127"/>
    </location>
</feature>
<feature type="active site" description="Schiff-base intermediate with substrate; via pyruvic acid" evidence="1">
    <location>
        <position position="25"/>
    </location>
</feature>
<feature type="active site" description="Proton donor" evidence="1">
    <location>
        <position position="58"/>
    </location>
</feature>
<feature type="binding site" evidence="1">
    <location>
        <position position="57"/>
    </location>
    <ligand>
        <name>substrate</name>
    </ligand>
</feature>
<feature type="binding site" evidence="1">
    <location>
        <begin position="73"/>
        <end position="75"/>
    </location>
    <ligand>
        <name>substrate</name>
    </ligand>
</feature>
<feature type="modified residue" description="Pyruvic acid (Ser)" evidence="1">
    <location>
        <position position="25"/>
    </location>
</feature>
<sequence>MFRTILGGKIHRATVTEADLNYVGSITVDQDLLDAAGICPNEKVAIVNNNNGERFETYTIAGKRGSGVICLNGAAARLVQKGDIVIIMSYIQLSEPEIAAHEPKVVLVDGNNKIRDIISYEPPHTVL</sequence>
<keyword id="KW-0068">Autocatalytic cleavage</keyword>
<keyword id="KW-0963">Cytoplasm</keyword>
<keyword id="KW-0210">Decarboxylase</keyword>
<keyword id="KW-0456">Lyase</keyword>
<keyword id="KW-0566">Pantothenate biosynthesis</keyword>
<keyword id="KW-0670">Pyruvate</keyword>
<keyword id="KW-0704">Schiff base</keyword>
<keyword id="KW-0865">Zymogen</keyword>
<comment type="function">
    <text evidence="1">Catalyzes the pyruvoyl-dependent decarboxylation of aspartate to produce beta-alanine.</text>
</comment>
<comment type="catalytic activity">
    <reaction evidence="1">
        <text>L-aspartate + H(+) = beta-alanine + CO2</text>
        <dbReference type="Rhea" id="RHEA:19497"/>
        <dbReference type="ChEBI" id="CHEBI:15378"/>
        <dbReference type="ChEBI" id="CHEBI:16526"/>
        <dbReference type="ChEBI" id="CHEBI:29991"/>
        <dbReference type="ChEBI" id="CHEBI:57966"/>
        <dbReference type="EC" id="4.1.1.11"/>
    </reaction>
</comment>
<comment type="cofactor">
    <cofactor evidence="1">
        <name>pyruvate</name>
        <dbReference type="ChEBI" id="CHEBI:15361"/>
    </cofactor>
    <text evidence="1">Binds 1 pyruvoyl group covalently per subunit.</text>
</comment>
<comment type="pathway">
    <text evidence="1">Cofactor biosynthesis; (R)-pantothenate biosynthesis; beta-alanine from L-aspartate: step 1/1.</text>
</comment>
<comment type="subunit">
    <text evidence="1">Heterooctamer of four alpha and four beta subunits.</text>
</comment>
<comment type="subcellular location">
    <subcellularLocation>
        <location evidence="1">Cytoplasm</location>
    </subcellularLocation>
</comment>
<comment type="PTM">
    <text evidence="1">Is synthesized initially as an inactive proenzyme, which is activated by self-cleavage at a specific serine bond to produce a beta-subunit with a hydroxyl group at its C-terminus and an alpha-subunit with a pyruvoyl group at its N-terminus.</text>
</comment>
<comment type="similarity">
    <text evidence="1">Belongs to the PanD family.</text>
</comment>
<dbReference type="EC" id="4.1.1.11" evidence="1"/>
<dbReference type="EMBL" id="CP001050">
    <property type="protein sequence ID" value="ACF29970.1"/>
    <property type="molecule type" value="Genomic_DNA"/>
</dbReference>
<dbReference type="RefSeq" id="WP_003688909.1">
    <property type="nucleotide sequence ID" value="NC_011035.1"/>
</dbReference>
<dbReference type="SMR" id="B4RMD5"/>
<dbReference type="GeneID" id="66752959"/>
<dbReference type="KEGG" id="ngk:NGK_1295"/>
<dbReference type="HOGENOM" id="CLU_115305_2_0_4"/>
<dbReference type="UniPathway" id="UPA00028">
    <property type="reaction ID" value="UER00002"/>
</dbReference>
<dbReference type="Proteomes" id="UP000002564">
    <property type="component" value="Chromosome"/>
</dbReference>
<dbReference type="GO" id="GO:0005829">
    <property type="term" value="C:cytosol"/>
    <property type="evidence" value="ECO:0007669"/>
    <property type="project" value="TreeGrafter"/>
</dbReference>
<dbReference type="GO" id="GO:0004068">
    <property type="term" value="F:aspartate 1-decarboxylase activity"/>
    <property type="evidence" value="ECO:0007669"/>
    <property type="project" value="UniProtKB-UniRule"/>
</dbReference>
<dbReference type="GO" id="GO:0006523">
    <property type="term" value="P:alanine biosynthetic process"/>
    <property type="evidence" value="ECO:0007669"/>
    <property type="project" value="InterPro"/>
</dbReference>
<dbReference type="GO" id="GO:0015940">
    <property type="term" value="P:pantothenate biosynthetic process"/>
    <property type="evidence" value="ECO:0007669"/>
    <property type="project" value="UniProtKB-UniRule"/>
</dbReference>
<dbReference type="CDD" id="cd06919">
    <property type="entry name" value="Asp_decarbox"/>
    <property type="match status" value="1"/>
</dbReference>
<dbReference type="Gene3D" id="2.40.40.20">
    <property type="match status" value="1"/>
</dbReference>
<dbReference type="HAMAP" id="MF_00446">
    <property type="entry name" value="PanD"/>
    <property type="match status" value="1"/>
</dbReference>
<dbReference type="InterPro" id="IPR009010">
    <property type="entry name" value="Asp_de-COase-like_dom_sf"/>
</dbReference>
<dbReference type="InterPro" id="IPR003190">
    <property type="entry name" value="Asp_decarbox"/>
</dbReference>
<dbReference type="NCBIfam" id="TIGR00223">
    <property type="entry name" value="panD"/>
    <property type="match status" value="1"/>
</dbReference>
<dbReference type="PANTHER" id="PTHR21012">
    <property type="entry name" value="ASPARTATE 1-DECARBOXYLASE"/>
    <property type="match status" value="1"/>
</dbReference>
<dbReference type="PANTHER" id="PTHR21012:SF0">
    <property type="entry name" value="ASPARTATE 1-DECARBOXYLASE"/>
    <property type="match status" value="1"/>
</dbReference>
<dbReference type="Pfam" id="PF02261">
    <property type="entry name" value="Asp_decarbox"/>
    <property type="match status" value="1"/>
</dbReference>
<dbReference type="PIRSF" id="PIRSF006246">
    <property type="entry name" value="Asp_decarbox"/>
    <property type="match status" value="1"/>
</dbReference>
<dbReference type="SUPFAM" id="SSF50692">
    <property type="entry name" value="ADC-like"/>
    <property type="match status" value="1"/>
</dbReference>